<accession>A1KV06</accession>
<sequence>MKSVRSFIRDDIQAMSAYQIADVPPGFAKLDSMESPVHPFAGHETLLQEWQARLAAAPIHLYPNPSGSGLQEALRSAFDIPDCADIALGNGSDELIQFITMLTAKPGAAMLAAEPSFVMYRHNAALYGMDYVGVPLNGDFTLNLPAVLEAVRKHRPALTFIAYPNNPTGVCFTRAEIEAVIEASDGIVVVDEAYGAFNGDSFLPQAGSIPNLIVMRTVSKIGFAGLRIGYAAGCPEVIGELQKILPPYNMNQLSLTTAKLALQHYGIISANIDSLKNERERMFAELGKICRLNTFPSQANFITIRVPDADLLFDTLKQNRILVKKLHGAHPLLEHCLRITVGSPAQNDAVLNIIRQLYCQPTDFL</sequence>
<comment type="catalytic activity">
    <reaction evidence="1">
        <text>L-histidinol phosphate + 2-oxoglutarate = 3-(imidazol-4-yl)-2-oxopropyl phosphate + L-glutamate</text>
        <dbReference type="Rhea" id="RHEA:23744"/>
        <dbReference type="ChEBI" id="CHEBI:16810"/>
        <dbReference type="ChEBI" id="CHEBI:29985"/>
        <dbReference type="ChEBI" id="CHEBI:57766"/>
        <dbReference type="ChEBI" id="CHEBI:57980"/>
        <dbReference type="EC" id="2.6.1.9"/>
    </reaction>
</comment>
<comment type="cofactor">
    <cofactor evidence="1">
        <name>pyridoxal 5'-phosphate</name>
        <dbReference type="ChEBI" id="CHEBI:597326"/>
    </cofactor>
</comment>
<comment type="pathway">
    <text evidence="1">Amino-acid biosynthesis; L-histidine biosynthesis; L-histidine from 5-phospho-alpha-D-ribose 1-diphosphate: step 7/9.</text>
</comment>
<comment type="subunit">
    <text evidence="1">Homodimer.</text>
</comment>
<comment type="similarity">
    <text evidence="1">Belongs to the class-II pyridoxal-phosphate-dependent aminotransferase family. Histidinol-phosphate aminotransferase subfamily.</text>
</comment>
<dbReference type="EC" id="2.6.1.9" evidence="1"/>
<dbReference type="EMBL" id="AM421808">
    <property type="protein sequence ID" value="CAM10705.1"/>
    <property type="molecule type" value="Genomic_DNA"/>
</dbReference>
<dbReference type="RefSeq" id="WP_002212810.1">
    <property type="nucleotide sequence ID" value="NC_008767.1"/>
</dbReference>
<dbReference type="SMR" id="A1KV06"/>
<dbReference type="GeneID" id="93387805"/>
<dbReference type="KEGG" id="nmc:NMC1502"/>
<dbReference type="HOGENOM" id="CLU_017584_3_1_4"/>
<dbReference type="UniPathway" id="UPA00031">
    <property type="reaction ID" value="UER00012"/>
</dbReference>
<dbReference type="Proteomes" id="UP000002286">
    <property type="component" value="Chromosome"/>
</dbReference>
<dbReference type="GO" id="GO:0004400">
    <property type="term" value="F:histidinol-phosphate transaminase activity"/>
    <property type="evidence" value="ECO:0007669"/>
    <property type="project" value="UniProtKB-UniRule"/>
</dbReference>
<dbReference type="GO" id="GO:0030170">
    <property type="term" value="F:pyridoxal phosphate binding"/>
    <property type="evidence" value="ECO:0007669"/>
    <property type="project" value="InterPro"/>
</dbReference>
<dbReference type="GO" id="GO:0000105">
    <property type="term" value="P:L-histidine biosynthetic process"/>
    <property type="evidence" value="ECO:0007669"/>
    <property type="project" value="UniProtKB-UniRule"/>
</dbReference>
<dbReference type="CDD" id="cd00609">
    <property type="entry name" value="AAT_like"/>
    <property type="match status" value="1"/>
</dbReference>
<dbReference type="Gene3D" id="3.90.1150.10">
    <property type="entry name" value="Aspartate Aminotransferase, domain 1"/>
    <property type="match status" value="1"/>
</dbReference>
<dbReference type="Gene3D" id="3.40.640.10">
    <property type="entry name" value="Type I PLP-dependent aspartate aminotransferase-like (Major domain)"/>
    <property type="match status" value="1"/>
</dbReference>
<dbReference type="HAMAP" id="MF_01023">
    <property type="entry name" value="HisC_aminotrans_2"/>
    <property type="match status" value="1"/>
</dbReference>
<dbReference type="InterPro" id="IPR004839">
    <property type="entry name" value="Aminotransferase_I/II_large"/>
</dbReference>
<dbReference type="InterPro" id="IPR005861">
    <property type="entry name" value="HisP_aminotrans"/>
</dbReference>
<dbReference type="InterPro" id="IPR015424">
    <property type="entry name" value="PyrdxlP-dep_Trfase"/>
</dbReference>
<dbReference type="InterPro" id="IPR015421">
    <property type="entry name" value="PyrdxlP-dep_Trfase_major"/>
</dbReference>
<dbReference type="InterPro" id="IPR015422">
    <property type="entry name" value="PyrdxlP-dep_Trfase_small"/>
</dbReference>
<dbReference type="NCBIfam" id="TIGR01141">
    <property type="entry name" value="hisC"/>
    <property type="match status" value="1"/>
</dbReference>
<dbReference type="PANTHER" id="PTHR42885:SF2">
    <property type="entry name" value="HISTIDINOL-PHOSPHATE AMINOTRANSFERASE"/>
    <property type="match status" value="1"/>
</dbReference>
<dbReference type="PANTHER" id="PTHR42885">
    <property type="entry name" value="HISTIDINOL-PHOSPHATE AMINOTRANSFERASE-RELATED"/>
    <property type="match status" value="1"/>
</dbReference>
<dbReference type="Pfam" id="PF00155">
    <property type="entry name" value="Aminotran_1_2"/>
    <property type="match status" value="1"/>
</dbReference>
<dbReference type="SUPFAM" id="SSF53383">
    <property type="entry name" value="PLP-dependent transferases"/>
    <property type="match status" value="1"/>
</dbReference>
<evidence type="ECO:0000255" key="1">
    <source>
        <dbReference type="HAMAP-Rule" id="MF_01023"/>
    </source>
</evidence>
<name>HIS8_NEIMF</name>
<proteinExistence type="inferred from homology"/>
<keyword id="KW-0028">Amino-acid biosynthesis</keyword>
<keyword id="KW-0032">Aminotransferase</keyword>
<keyword id="KW-0368">Histidine biosynthesis</keyword>
<keyword id="KW-0663">Pyridoxal phosphate</keyword>
<keyword id="KW-0808">Transferase</keyword>
<protein>
    <recommendedName>
        <fullName evidence="1">Histidinol-phosphate aminotransferase</fullName>
        <ecNumber evidence="1">2.6.1.9</ecNumber>
    </recommendedName>
    <alternativeName>
        <fullName evidence="1">Imidazole acetol-phosphate transaminase</fullName>
    </alternativeName>
</protein>
<organism>
    <name type="scientific">Neisseria meningitidis serogroup C / serotype 2a (strain ATCC 700532 / DSM 15464 / FAM18)</name>
    <dbReference type="NCBI Taxonomy" id="272831"/>
    <lineage>
        <taxon>Bacteria</taxon>
        <taxon>Pseudomonadati</taxon>
        <taxon>Pseudomonadota</taxon>
        <taxon>Betaproteobacteria</taxon>
        <taxon>Neisseriales</taxon>
        <taxon>Neisseriaceae</taxon>
        <taxon>Neisseria</taxon>
    </lineage>
</organism>
<reference key="1">
    <citation type="journal article" date="2007" name="PLoS Genet.">
        <title>Meningococcal genetic variation mechanisms viewed through comparative analysis of serogroup C strain FAM18.</title>
        <authorList>
            <person name="Bentley S.D."/>
            <person name="Vernikos G.S."/>
            <person name="Snyder L.A.S."/>
            <person name="Churcher C."/>
            <person name="Arrowsmith C."/>
            <person name="Chillingworth T."/>
            <person name="Cronin A."/>
            <person name="Davis P.H."/>
            <person name="Holroyd N.E."/>
            <person name="Jagels K."/>
            <person name="Maddison M."/>
            <person name="Moule S."/>
            <person name="Rabbinowitsch E."/>
            <person name="Sharp S."/>
            <person name="Unwin L."/>
            <person name="Whitehead S."/>
            <person name="Quail M.A."/>
            <person name="Achtman M."/>
            <person name="Barrell B.G."/>
            <person name="Saunders N.J."/>
            <person name="Parkhill J."/>
        </authorList>
    </citation>
    <scope>NUCLEOTIDE SEQUENCE [LARGE SCALE GENOMIC DNA]</scope>
    <source>
        <strain>ATCC 700532 / DSM 15464 / FAM18</strain>
    </source>
</reference>
<feature type="chain" id="PRO_1000063486" description="Histidinol-phosphate aminotransferase">
    <location>
        <begin position="1"/>
        <end position="365"/>
    </location>
</feature>
<feature type="modified residue" description="N6-(pyridoxal phosphate)lysine" evidence="1">
    <location>
        <position position="220"/>
    </location>
</feature>
<gene>
    <name evidence="1" type="primary">hisC</name>
    <name type="ordered locus">NMC1502</name>
</gene>